<evidence type="ECO:0000269" key="1">
    <source>
    </source>
</evidence>
<evidence type="ECO:0000303" key="2">
    <source>
    </source>
</evidence>
<evidence type="ECO:0000305" key="3"/>
<proteinExistence type="evidence at protein level"/>
<dbReference type="EMBL" id="Z73234">
    <property type="protein sequence ID" value="CAA97603.1"/>
    <property type="molecule type" value="Genomic_DNA"/>
</dbReference>
<dbReference type="EMBL" id="AL009126">
    <property type="protein sequence ID" value="CAB13689.1"/>
    <property type="molecule type" value="Genomic_DNA"/>
</dbReference>
<dbReference type="PIR" id="H69891">
    <property type="entry name" value="H69891"/>
</dbReference>
<dbReference type="RefSeq" id="NP_389688.1">
    <property type="nucleotide sequence ID" value="NC_000964.3"/>
</dbReference>
<dbReference type="RefSeq" id="WP_003231562.1">
    <property type="nucleotide sequence ID" value="NZ_OZ025638.1"/>
</dbReference>
<dbReference type="SMR" id="Q45063"/>
<dbReference type="FunCoup" id="Q45063">
    <property type="interactions" value="51"/>
</dbReference>
<dbReference type="STRING" id="224308.BSU18060"/>
<dbReference type="PaxDb" id="224308-BSU18060"/>
<dbReference type="EnsemblBacteria" id="CAB13689">
    <property type="protein sequence ID" value="CAB13689"/>
    <property type="gene ID" value="BSU_18060"/>
</dbReference>
<dbReference type="GeneID" id="938132"/>
<dbReference type="KEGG" id="bsu:BSU18060"/>
<dbReference type="PATRIC" id="fig|224308.179.peg.1968"/>
<dbReference type="eggNOG" id="COG4841">
    <property type="taxonomic scope" value="Bacteria"/>
</dbReference>
<dbReference type="InParanoid" id="Q45063"/>
<dbReference type="OrthoDB" id="1645729at2"/>
<dbReference type="PhylomeDB" id="Q45063"/>
<dbReference type="BioCyc" id="BSUB:BSU18060-MONOMER"/>
<dbReference type="Proteomes" id="UP000001570">
    <property type="component" value="Chromosome"/>
</dbReference>
<dbReference type="Gene3D" id="2.60.300.12">
    <property type="entry name" value="HesB-like domain"/>
    <property type="match status" value="1"/>
</dbReference>
<dbReference type="InterPro" id="IPR000361">
    <property type="entry name" value="FeS_biogenesis"/>
</dbReference>
<dbReference type="InterPro" id="IPR035903">
    <property type="entry name" value="HesB-like_dom_sf"/>
</dbReference>
<dbReference type="InterPro" id="IPR008326">
    <property type="entry name" value="PdhI-like"/>
</dbReference>
<dbReference type="Pfam" id="PF01521">
    <property type="entry name" value="Fe-S_biosyn"/>
    <property type="match status" value="1"/>
</dbReference>
<dbReference type="PIRSF" id="PIRSF034852">
    <property type="entry name" value="UCP034852"/>
    <property type="match status" value="1"/>
</dbReference>
<dbReference type="SUPFAM" id="SSF89360">
    <property type="entry name" value="HesB-like domain"/>
    <property type="match status" value="1"/>
</dbReference>
<comment type="function">
    <text evidence="1">Acts as an inhibitor of the pyruvate dehydrogenase (PubMed:36815589). Overexpression does not affect growth with glucose as the main carbon source, but it leads to a dramatic growth defect when cells are grown with pyruvate as the sole carbon source (PubMed:36815589).</text>
</comment>
<comment type="subunit">
    <text evidence="1">Interacts with the E1 module of pyruvate dehydrogenase (PdhA-PdhB).</text>
</comment>
<comment type="disruption phenotype">
    <text evidence="1">Knockout mutant does not have growth defects compared to the wild-type when grown with glucose as the main carbon source.</text>
</comment>
<comment type="similarity">
    <text evidence="3">Belongs to the HesB/IscA family.</text>
</comment>
<gene>
    <name evidence="2" type="primary">pdhI</name>
    <name type="synonym">yneR</name>
    <name type="ordered locus">BSU18060</name>
</gene>
<keyword id="KW-1185">Reference proteome</keyword>
<name>PDHI_BACSU</name>
<feature type="chain" id="PRO_0000360431" description="Pyruvate dehydrogenase inhibitor">
    <location>
        <begin position="1"/>
        <end position="95"/>
    </location>
</feature>
<feature type="mutagenesis site" description="Does not show growth defects on glucose or pyruvate media when overexpressed." evidence="1">
    <original>RY</original>
    <variation>AA</variation>
    <location>
        <begin position="30"/>
        <end position="31"/>
    </location>
</feature>
<feature type="mutagenesis site" description="Does not show growth defects on glucose or pyruvate media when overexpressed." evidence="1">
    <original>RY</original>
    <variation>AD</variation>
    <location>
        <begin position="30"/>
        <end position="31"/>
    </location>
</feature>
<organism>
    <name type="scientific">Bacillus subtilis (strain 168)</name>
    <dbReference type="NCBI Taxonomy" id="224308"/>
    <lineage>
        <taxon>Bacteria</taxon>
        <taxon>Bacillati</taxon>
        <taxon>Bacillota</taxon>
        <taxon>Bacilli</taxon>
        <taxon>Bacillales</taxon>
        <taxon>Bacillaceae</taxon>
        <taxon>Bacillus</taxon>
    </lineage>
</organism>
<reference key="1">
    <citation type="journal article" date="1996" name="Microbiology">
        <title>New genes in the 170 degrees region of the Bacillus subtilis genome encode DNA gyrase subunits, a thioredoxin, a xylanase and an amino acid transporter.</title>
        <authorList>
            <person name="Rose M."/>
            <person name="Entian K.-D."/>
        </authorList>
    </citation>
    <scope>NUCLEOTIDE SEQUENCE [GENOMIC DNA]</scope>
    <source>
        <strain>168</strain>
    </source>
</reference>
<reference key="2">
    <citation type="journal article" date="1997" name="Nature">
        <title>The complete genome sequence of the Gram-positive bacterium Bacillus subtilis.</title>
        <authorList>
            <person name="Kunst F."/>
            <person name="Ogasawara N."/>
            <person name="Moszer I."/>
            <person name="Albertini A.M."/>
            <person name="Alloni G."/>
            <person name="Azevedo V."/>
            <person name="Bertero M.G."/>
            <person name="Bessieres P."/>
            <person name="Bolotin A."/>
            <person name="Borchert S."/>
            <person name="Borriss R."/>
            <person name="Boursier L."/>
            <person name="Brans A."/>
            <person name="Braun M."/>
            <person name="Brignell S.C."/>
            <person name="Bron S."/>
            <person name="Brouillet S."/>
            <person name="Bruschi C.V."/>
            <person name="Caldwell B."/>
            <person name="Capuano V."/>
            <person name="Carter N.M."/>
            <person name="Choi S.-K."/>
            <person name="Codani J.-J."/>
            <person name="Connerton I.F."/>
            <person name="Cummings N.J."/>
            <person name="Daniel R.A."/>
            <person name="Denizot F."/>
            <person name="Devine K.M."/>
            <person name="Duesterhoeft A."/>
            <person name="Ehrlich S.D."/>
            <person name="Emmerson P.T."/>
            <person name="Entian K.-D."/>
            <person name="Errington J."/>
            <person name="Fabret C."/>
            <person name="Ferrari E."/>
            <person name="Foulger D."/>
            <person name="Fritz C."/>
            <person name="Fujita M."/>
            <person name="Fujita Y."/>
            <person name="Fuma S."/>
            <person name="Galizzi A."/>
            <person name="Galleron N."/>
            <person name="Ghim S.-Y."/>
            <person name="Glaser P."/>
            <person name="Goffeau A."/>
            <person name="Golightly E.J."/>
            <person name="Grandi G."/>
            <person name="Guiseppi G."/>
            <person name="Guy B.J."/>
            <person name="Haga K."/>
            <person name="Haiech J."/>
            <person name="Harwood C.R."/>
            <person name="Henaut A."/>
            <person name="Hilbert H."/>
            <person name="Holsappel S."/>
            <person name="Hosono S."/>
            <person name="Hullo M.-F."/>
            <person name="Itaya M."/>
            <person name="Jones L.-M."/>
            <person name="Joris B."/>
            <person name="Karamata D."/>
            <person name="Kasahara Y."/>
            <person name="Klaerr-Blanchard M."/>
            <person name="Klein C."/>
            <person name="Kobayashi Y."/>
            <person name="Koetter P."/>
            <person name="Koningstein G."/>
            <person name="Krogh S."/>
            <person name="Kumano M."/>
            <person name="Kurita K."/>
            <person name="Lapidus A."/>
            <person name="Lardinois S."/>
            <person name="Lauber J."/>
            <person name="Lazarevic V."/>
            <person name="Lee S.-M."/>
            <person name="Levine A."/>
            <person name="Liu H."/>
            <person name="Masuda S."/>
            <person name="Mauel C."/>
            <person name="Medigue C."/>
            <person name="Medina N."/>
            <person name="Mellado R.P."/>
            <person name="Mizuno M."/>
            <person name="Moestl D."/>
            <person name="Nakai S."/>
            <person name="Noback M."/>
            <person name="Noone D."/>
            <person name="O'Reilly M."/>
            <person name="Ogawa K."/>
            <person name="Ogiwara A."/>
            <person name="Oudega B."/>
            <person name="Park S.-H."/>
            <person name="Parro V."/>
            <person name="Pohl T.M."/>
            <person name="Portetelle D."/>
            <person name="Porwollik S."/>
            <person name="Prescott A.M."/>
            <person name="Presecan E."/>
            <person name="Pujic P."/>
            <person name="Purnelle B."/>
            <person name="Rapoport G."/>
            <person name="Rey M."/>
            <person name="Reynolds S."/>
            <person name="Rieger M."/>
            <person name="Rivolta C."/>
            <person name="Rocha E."/>
            <person name="Roche B."/>
            <person name="Rose M."/>
            <person name="Sadaie Y."/>
            <person name="Sato T."/>
            <person name="Scanlan E."/>
            <person name="Schleich S."/>
            <person name="Schroeter R."/>
            <person name="Scoffone F."/>
            <person name="Sekiguchi J."/>
            <person name="Sekowska A."/>
            <person name="Seror S.J."/>
            <person name="Serror P."/>
            <person name="Shin B.-S."/>
            <person name="Soldo B."/>
            <person name="Sorokin A."/>
            <person name="Tacconi E."/>
            <person name="Takagi T."/>
            <person name="Takahashi H."/>
            <person name="Takemaru K."/>
            <person name="Takeuchi M."/>
            <person name="Tamakoshi A."/>
            <person name="Tanaka T."/>
            <person name="Terpstra P."/>
            <person name="Tognoni A."/>
            <person name="Tosato V."/>
            <person name="Uchiyama S."/>
            <person name="Vandenbol M."/>
            <person name="Vannier F."/>
            <person name="Vassarotti A."/>
            <person name="Viari A."/>
            <person name="Wambutt R."/>
            <person name="Wedler E."/>
            <person name="Wedler H."/>
            <person name="Weitzenegger T."/>
            <person name="Winters P."/>
            <person name="Wipat A."/>
            <person name="Yamamoto H."/>
            <person name="Yamane K."/>
            <person name="Yasumoto K."/>
            <person name="Yata K."/>
            <person name="Yoshida K."/>
            <person name="Yoshikawa H.-F."/>
            <person name="Zumstein E."/>
            <person name="Yoshikawa H."/>
            <person name="Danchin A."/>
        </authorList>
    </citation>
    <scope>NUCLEOTIDE SEQUENCE [LARGE SCALE GENOMIC DNA]</scope>
    <source>
        <strain>168</strain>
    </source>
</reference>
<reference key="3">
    <citation type="journal article" date="2023" name="Mol. Syst. Biol.">
        <title>Protein complexes in cells by AI-assisted structural proteomics.</title>
        <authorList>
            <person name="O'Reilly F.J."/>
            <person name="Graziadei A."/>
            <person name="Forbrig C."/>
            <person name="Bremenkamp R."/>
            <person name="Charles K."/>
            <person name="Lenz S."/>
            <person name="Elfmann C."/>
            <person name="Fischer L."/>
            <person name="Stuelke J."/>
            <person name="Rappsilber J."/>
        </authorList>
    </citation>
    <scope>FUNCTION</scope>
    <scope>INTERACTION WITH PYRUVATE DEHYDROGENASE</scope>
    <scope>DISRUPTION PHENOTYPE</scope>
    <scope>MUTAGENESIS OF 30-ARG-TYR-31</scope>
    <source>
        <strain>168</strain>
    </source>
</reference>
<protein>
    <recommendedName>
        <fullName evidence="2">Pyruvate dehydrogenase inhibitor</fullName>
    </recommendedName>
</protein>
<sequence>MNMTINEDALNWYKEELDLESGDQVRFFVRYGGCSNVQKGFSLGVAKDAPQEAGVTAEADGITFFIEESDLWYFDNHDLLVSYSEDADEPVFEYQ</sequence>
<accession>Q45063</accession>
<accession>Q796G6</accession>